<comment type="function">
    <text>Involved in the biosynthesis of the capsular polysaccharide colanic acid.</text>
</comment>
<comment type="catalytic activity">
    <reaction>
        <text>alpha-D-mannose 1-phosphate = D-mannose 6-phosphate</text>
        <dbReference type="Rhea" id="RHEA:11140"/>
        <dbReference type="ChEBI" id="CHEBI:58409"/>
        <dbReference type="ChEBI" id="CHEBI:58735"/>
        <dbReference type="EC" id="5.4.2.8"/>
    </reaction>
</comment>
<comment type="cofactor">
    <cofactor evidence="1">
        <name>Mg(2+)</name>
        <dbReference type="ChEBI" id="CHEBI:18420"/>
    </cofactor>
    <text evidence="1">Binds 1 Mg(2+) ion per subunit.</text>
</comment>
<comment type="pathway">
    <text>Nucleotide-sugar biosynthesis; GDP-alpha-D-mannose biosynthesis; alpha-D-mannose 1-phosphate from D-fructose 6-phosphate: step 2/2.</text>
</comment>
<comment type="similarity">
    <text evidence="2">Belongs to the phosphohexose mutase family.</text>
</comment>
<accession>P24175</accession>
<reference key="1">
    <citation type="submission" date="1991-09" db="EMBL/GenBank/DDBJ databases">
        <title>The nucleotide sequence of the phosphoglucomutase gene in E. coli.</title>
        <authorList>
            <person name="Tal R."/>
            <person name="Eichinger G."/>
            <person name="Emerick A."/>
            <person name="Wong H.C."/>
        </authorList>
    </citation>
    <scope>NUCLEOTIDE SEQUENCE [GENOMIC DNA]</scope>
</reference>
<reference key="2">
    <citation type="journal article" date="1994" name="Mol. Biol. Evol.">
        <title>Evidence for effect of random genetic drift on G+C content after lateral transfer of fucose pathway genes to Escherichia coli K-12.</title>
        <authorList>
            <person name="Aoyama K."/>
            <person name="Haase A.M."/>
            <person name="Reeves P.R."/>
        </authorList>
    </citation>
    <scope>NUCLEOTIDE SEQUENCE [GENOMIC DNA]</scope>
    <source>
        <strain>K12</strain>
    </source>
</reference>
<reference key="3">
    <citation type="journal article" date="1996" name="J. Bacteriol.">
        <title>Organization of the Escherichia coli K-12 gene cluster responsible for production of the extracellular polysaccharide colanic acid.</title>
        <authorList>
            <person name="Stevenson G."/>
            <person name="Andrianopoulos K."/>
            <person name="Hobbs M."/>
            <person name="Reeves P.R."/>
        </authorList>
    </citation>
    <scope>NUCLEOTIDE SEQUENCE [GENOMIC DNA]</scope>
    <source>
        <strain>K12</strain>
    </source>
</reference>
<reference key="4">
    <citation type="journal article" date="1996" name="DNA Res.">
        <title>A 460-kb DNA sequence of the Escherichia coli K-12 genome corresponding to the 40.1-50.0 min region on the linkage map.</title>
        <authorList>
            <person name="Itoh T."/>
            <person name="Aiba H."/>
            <person name="Baba T."/>
            <person name="Fujita K."/>
            <person name="Hayashi K."/>
            <person name="Inada T."/>
            <person name="Isono K."/>
            <person name="Kasai H."/>
            <person name="Kimura S."/>
            <person name="Kitakawa M."/>
            <person name="Kitagawa M."/>
            <person name="Makino K."/>
            <person name="Miki T."/>
            <person name="Mizobuchi K."/>
            <person name="Mori H."/>
            <person name="Mori T."/>
            <person name="Motomura K."/>
            <person name="Nakade S."/>
            <person name="Nakamura Y."/>
            <person name="Nashimoto H."/>
            <person name="Nishio Y."/>
            <person name="Oshima T."/>
            <person name="Saito N."/>
            <person name="Sampei G."/>
            <person name="Seki Y."/>
            <person name="Sivasundaram S."/>
            <person name="Tagami H."/>
            <person name="Takeda J."/>
            <person name="Takemoto K."/>
            <person name="Wada C."/>
            <person name="Yamamoto Y."/>
            <person name="Horiuchi T."/>
        </authorList>
    </citation>
    <scope>NUCLEOTIDE SEQUENCE [LARGE SCALE GENOMIC DNA]</scope>
    <source>
        <strain>K12 / W3110 / ATCC 27325 / DSM 5911</strain>
    </source>
</reference>
<reference key="5">
    <citation type="journal article" date="1997" name="Science">
        <title>The complete genome sequence of Escherichia coli K-12.</title>
        <authorList>
            <person name="Blattner F.R."/>
            <person name="Plunkett G. III"/>
            <person name="Bloch C.A."/>
            <person name="Perna N.T."/>
            <person name="Burland V."/>
            <person name="Riley M."/>
            <person name="Collado-Vides J."/>
            <person name="Glasner J.D."/>
            <person name="Rode C.K."/>
            <person name="Mayhew G.F."/>
            <person name="Gregor J."/>
            <person name="Davis N.W."/>
            <person name="Kirkpatrick H.A."/>
            <person name="Goeden M.A."/>
            <person name="Rose D.J."/>
            <person name="Mau B."/>
            <person name="Shao Y."/>
        </authorList>
    </citation>
    <scope>NUCLEOTIDE SEQUENCE [LARGE SCALE GENOMIC DNA]</scope>
    <source>
        <strain>K12 / MG1655 / ATCC 47076</strain>
    </source>
</reference>
<reference key="6">
    <citation type="journal article" date="2006" name="Mol. Syst. Biol.">
        <title>Highly accurate genome sequences of Escherichia coli K-12 strains MG1655 and W3110.</title>
        <authorList>
            <person name="Hayashi K."/>
            <person name="Morooka N."/>
            <person name="Yamamoto Y."/>
            <person name="Fujita K."/>
            <person name="Isono K."/>
            <person name="Choi S."/>
            <person name="Ohtsubo E."/>
            <person name="Baba T."/>
            <person name="Wanner B.L."/>
            <person name="Mori H."/>
            <person name="Horiuchi T."/>
        </authorList>
    </citation>
    <scope>NUCLEOTIDE SEQUENCE [LARGE SCALE GENOMIC DNA]</scope>
    <source>
        <strain>K12 / W3110 / ATCC 27325 / DSM 5911</strain>
    </source>
</reference>
<gene>
    <name type="primary">manB</name>
    <name type="synonym">cpsG</name>
    <name type="synonym">rfbL</name>
    <name type="ordered locus">b2048</name>
    <name type="ordered locus">JW2033</name>
</gene>
<protein>
    <recommendedName>
        <fullName>Phosphomannomutase</fullName>
        <shortName>PMM</shortName>
        <ecNumber>5.4.2.8</ecNumber>
    </recommendedName>
</protein>
<organism>
    <name type="scientific">Escherichia coli (strain K12)</name>
    <dbReference type="NCBI Taxonomy" id="83333"/>
    <lineage>
        <taxon>Bacteria</taxon>
        <taxon>Pseudomonadati</taxon>
        <taxon>Pseudomonadota</taxon>
        <taxon>Gammaproteobacteria</taxon>
        <taxon>Enterobacterales</taxon>
        <taxon>Enterobacteriaceae</taxon>
        <taxon>Escherichia</taxon>
    </lineage>
</organism>
<feature type="chain" id="PRO_0000147818" description="Phosphomannomutase">
    <location>
        <begin position="1"/>
        <end position="456"/>
    </location>
</feature>
<feature type="active site" description="Phosphoserine intermediate" evidence="1">
    <location>
        <position position="98"/>
    </location>
</feature>
<feature type="binding site" description="via phosphate group" evidence="1">
    <location>
        <position position="98"/>
    </location>
    <ligand>
        <name>Mg(2+)</name>
        <dbReference type="ChEBI" id="CHEBI:18420"/>
    </ligand>
</feature>
<feature type="binding site" evidence="1">
    <location>
        <position position="245"/>
    </location>
    <ligand>
        <name>Mg(2+)</name>
        <dbReference type="ChEBI" id="CHEBI:18420"/>
    </ligand>
</feature>
<feature type="binding site" evidence="1">
    <location>
        <position position="247"/>
    </location>
    <ligand>
        <name>Mg(2+)</name>
        <dbReference type="ChEBI" id="CHEBI:18420"/>
    </ligand>
</feature>
<feature type="binding site" evidence="1">
    <location>
        <position position="249"/>
    </location>
    <ligand>
        <name>Mg(2+)</name>
        <dbReference type="ChEBI" id="CHEBI:18420"/>
    </ligand>
</feature>
<evidence type="ECO:0000250" key="1"/>
<evidence type="ECO:0000305" key="2"/>
<dbReference type="EC" id="5.4.2.8"/>
<dbReference type="EMBL" id="M77127">
    <property type="protein sequence ID" value="AAA02894.1"/>
    <property type="molecule type" value="Genomic_DNA"/>
</dbReference>
<dbReference type="EMBL" id="U38473">
    <property type="protein sequence ID" value="AAC77847.1"/>
    <property type="molecule type" value="Genomic_DNA"/>
</dbReference>
<dbReference type="EMBL" id="U00096">
    <property type="protein sequence ID" value="AAC75109.1"/>
    <property type="molecule type" value="Genomic_DNA"/>
</dbReference>
<dbReference type="EMBL" id="AP009048">
    <property type="protein sequence ID" value="BAA15901.2"/>
    <property type="molecule type" value="Genomic_DNA"/>
</dbReference>
<dbReference type="PIR" id="B55239">
    <property type="entry name" value="B55239"/>
</dbReference>
<dbReference type="RefSeq" id="NP_416552.1">
    <property type="nucleotide sequence ID" value="NC_000913.3"/>
</dbReference>
<dbReference type="RefSeq" id="WP_001350528.1">
    <property type="nucleotide sequence ID" value="NZ_LN832404.1"/>
</dbReference>
<dbReference type="SMR" id="P24175"/>
<dbReference type="BioGRID" id="4263309">
    <property type="interactions" value="294"/>
</dbReference>
<dbReference type="FunCoup" id="P24175">
    <property type="interactions" value="427"/>
</dbReference>
<dbReference type="IntAct" id="P24175">
    <property type="interactions" value="9"/>
</dbReference>
<dbReference type="STRING" id="511145.b2048"/>
<dbReference type="PaxDb" id="511145-b2048"/>
<dbReference type="EnsemblBacteria" id="AAC75109">
    <property type="protein sequence ID" value="AAC75109"/>
    <property type="gene ID" value="b2048"/>
</dbReference>
<dbReference type="GeneID" id="946574"/>
<dbReference type="KEGG" id="ecj:JW2033"/>
<dbReference type="KEGG" id="eco:b2048"/>
<dbReference type="KEGG" id="ecoc:C3026_11530"/>
<dbReference type="PATRIC" id="fig|511145.12.peg.2125"/>
<dbReference type="EchoBASE" id="EB0160"/>
<dbReference type="eggNOG" id="COG1109">
    <property type="taxonomic scope" value="Bacteria"/>
</dbReference>
<dbReference type="InParanoid" id="P24175"/>
<dbReference type="OMA" id="PELHYGR"/>
<dbReference type="OrthoDB" id="9803322at2"/>
<dbReference type="PhylomeDB" id="P24175"/>
<dbReference type="BioCyc" id="EcoCyc:PHOSMANMUT-MONOMER"/>
<dbReference type="BioCyc" id="MetaCyc:PHOSMANMUT-MONOMER"/>
<dbReference type="UniPathway" id="UPA00126">
    <property type="reaction ID" value="UER00424"/>
</dbReference>
<dbReference type="PRO" id="PR:P24175"/>
<dbReference type="Proteomes" id="UP000000625">
    <property type="component" value="Chromosome"/>
</dbReference>
<dbReference type="GO" id="GO:0000287">
    <property type="term" value="F:magnesium ion binding"/>
    <property type="evidence" value="ECO:0007669"/>
    <property type="project" value="InterPro"/>
</dbReference>
<dbReference type="GO" id="GO:0004615">
    <property type="term" value="F:phosphomannomutase activity"/>
    <property type="evidence" value="ECO:0007669"/>
    <property type="project" value="UniProtKB-EC"/>
</dbReference>
<dbReference type="GO" id="GO:0009298">
    <property type="term" value="P:GDP-mannose biosynthetic process"/>
    <property type="evidence" value="ECO:0000269"/>
    <property type="project" value="EcoCyc"/>
</dbReference>
<dbReference type="GO" id="GO:0009103">
    <property type="term" value="P:lipopolysaccharide biosynthetic process"/>
    <property type="evidence" value="ECO:0007669"/>
    <property type="project" value="UniProtKB-KW"/>
</dbReference>
<dbReference type="CDD" id="cd03089">
    <property type="entry name" value="PMM_PGM"/>
    <property type="match status" value="1"/>
</dbReference>
<dbReference type="Gene3D" id="3.40.120.10">
    <property type="entry name" value="Alpha-D-Glucose-1,6-Bisphosphate, subunit A, domain 3"/>
    <property type="match status" value="3"/>
</dbReference>
<dbReference type="Gene3D" id="3.30.310.50">
    <property type="entry name" value="Alpha-D-phosphohexomutase, C-terminal domain"/>
    <property type="match status" value="1"/>
</dbReference>
<dbReference type="InterPro" id="IPR005844">
    <property type="entry name" value="A-D-PHexomutase_a/b/a-I"/>
</dbReference>
<dbReference type="InterPro" id="IPR016055">
    <property type="entry name" value="A-D-PHexomutase_a/b/a-I/II/III"/>
</dbReference>
<dbReference type="InterPro" id="IPR005845">
    <property type="entry name" value="A-D-PHexomutase_a/b/a-II"/>
</dbReference>
<dbReference type="InterPro" id="IPR005846">
    <property type="entry name" value="A-D-PHexomutase_a/b/a-III"/>
</dbReference>
<dbReference type="InterPro" id="IPR005843">
    <property type="entry name" value="A-D-PHexomutase_C"/>
</dbReference>
<dbReference type="InterPro" id="IPR036900">
    <property type="entry name" value="A-D-PHexomutase_C_sf"/>
</dbReference>
<dbReference type="InterPro" id="IPR016066">
    <property type="entry name" value="A-D-PHexomutase_CS"/>
</dbReference>
<dbReference type="InterPro" id="IPR005841">
    <property type="entry name" value="Alpha-D-phosphohexomutase_SF"/>
</dbReference>
<dbReference type="NCBIfam" id="NF011943">
    <property type="entry name" value="PRK15414.1"/>
    <property type="match status" value="1"/>
</dbReference>
<dbReference type="PANTHER" id="PTHR43771">
    <property type="entry name" value="PHOSPHOMANNOMUTASE"/>
    <property type="match status" value="1"/>
</dbReference>
<dbReference type="PANTHER" id="PTHR43771:SF1">
    <property type="entry name" value="PHOSPHOMANNOMUTASE"/>
    <property type="match status" value="1"/>
</dbReference>
<dbReference type="Pfam" id="PF02878">
    <property type="entry name" value="PGM_PMM_I"/>
    <property type="match status" value="1"/>
</dbReference>
<dbReference type="Pfam" id="PF02879">
    <property type="entry name" value="PGM_PMM_II"/>
    <property type="match status" value="1"/>
</dbReference>
<dbReference type="Pfam" id="PF02880">
    <property type="entry name" value="PGM_PMM_III"/>
    <property type="match status" value="1"/>
</dbReference>
<dbReference type="Pfam" id="PF00408">
    <property type="entry name" value="PGM_PMM_IV"/>
    <property type="match status" value="1"/>
</dbReference>
<dbReference type="PRINTS" id="PR00509">
    <property type="entry name" value="PGMPMM"/>
</dbReference>
<dbReference type="SUPFAM" id="SSF55957">
    <property type="entry name" value="Phosphoglucomutase, C-terminal domain"/>
    <property type="match status" value="1"/>
</dbReference>
<dbReference type="SUPFAM" id="SSF53738">
    <property type="entry name" value="Phosphoglucomutase, first 3 domains"/>
    <property type="match status" value="3"/>
</dbReference>
<dbReference type="PROSITE" id="PS00710">
    <property type="entry name" value="PGM_PMM"/>
    <property type="match status" value="1"/>
</dbReference>
<proteinExistence type="inferred from homology"/>
<sequence>MKKLTCFKAYDIRGKLGEELNEDIAWRIGRAYGEFLKPKTIVLGGDVRLTSETLKLALAKGLQDAGVDVLDIGMSGTEEIYFATFHLGVDGGIEVTASHNPMDYNGMKLVREGARPISGDTGLRDVQRLAEANDFPPVDETKRGRYQQINLRDAYVDHLFGYINVKNLTPLKLVINSGNGAAGPVVDAIEARFKALGAPVELIKVHNTPDGNFPNGIPNPLLPECRDDTRNAVIKHGADMGIAFDGDFDRCFLFDEKGQFIEGYYIVGLLAEAFLEKNPGAKIIHDPRLSWNTVDVVTAAGGTPVMSKTGHAFIKERMRKEDAIYGGEMSAHHYFRDFAYCDSGMIPWLLVAELVCLKDKTLGELVRDRMAAFPASGEINSKLAQPVEAINRVEQHFSREALAVDRTDGISMTFADWRFNLRTSNTEPVVRLNVESRGDVPLMEARTRTLLTLLNE</sequence>
<name>MANB_ECOLI</name>
<keyword id="KW-0972">Capsule biogenesis/degradation</keyword>
<keyword id="KW-0413">Isomerase</keyword>
<keyword id="KW-0448">Lipopolysaccharide biosynthesis</keyword>
<keyword id="KW-0460">Magnesium</keyword>
<keyword id="KW-0479">Metal-binding</keyword>
<keyword id="KW-0597">Phosphoprotein</keyword>
<keyword id="KW-1185">Reference proteome</keyword>